<evidence type="ECO:0000269" key="1">
    <source>
    </source>
</evidence>
<evidence type="ECO:0000303" key="2">
    <source>
    </source>
</evidence>
<evidence type="ECO:0000305" key="3"/>
<evidence type="ECO:0000312" key="4">
    <source>
        <dbReference type="FlyBase" id="FBgn0011743"/>
    </source>
</evidence>
<reference key="1">
    <citation type="journal article" date="1994" name="J. Mol. Biol.">
        <title>Genes encoding actin-related proteins of Drosophila melanogaster.</title>
        <authorList>
            <person name="Fyrberg C."/>
            <person name="Ryan L."/>
            <person name="Kenton M."/>
            <person name="Fyrberg E.A."/>
        </authorList>
    </citation>
    <scope>NUCLEOTIDE SEQUENCE [MRNA]</scope>
    <source>
        <strain>Oregon-R</strain>
    </source>
</reference>
<reference key="2">
    <citation type="journal article" date="2000" name="Science">
        <title>The genome sequence of Drosophila melanogaster.</title>
        <authorList>
            <person name="Adams M.D."/>
            <person name="Celniker S.E."/>
            <person name="Holt R.A."/>
            <person name="Evans C.A."/>
            <person name="Gocayne J.D."/>
            <person name="Amanatides P.G."/>
            <person name="Scherer S.E."/>
            <person name="Li P.W."/>
            <person name="Hoskins R.A."/>
            <person name="Galle R.F."/>
            <person name="George R.A."/>
            <person name="Lewis S.E."/>
            <person name="Richards S."/>
            <person name="Ashburner M."/>
            <person name="Henderson S.N."/>
            <person name="Sutton G.G."/>
            <person name="Wortman J.R."/>
            <person name="Yandell M.D."/>
            <person name="Zhang Q."/>
            <person name="Chen L.X."/>
            <person name="Brandon R.C."/>
            <person name="Rogers Y.-H.C."/>
            <person name="Blazej R.G."/>
            <person name="Champe M."/>
            <person name="Pfeiffer B.D."/>
            <person name="Wan K.H."/>
            <person name="Doyle C."/>
            <person name="Baxter E.G."/>
            <person name="Helt G."/>
            <person name="Nelson C.R."/>
            <person name="Miklos G.L.G."/>
            <person name="Abril J.F."/>
            <person name="Agbayani A."/>
            <person name="An H.-J."/>
            <person name="Andrews-Pfannkoch C."/>
            <person name="Baldwin D."/>
            <person name="Ballew R.M."/>
            <person name="Basu A."/>
            <person name="Baxendale J."/>
            <person name="Bayraktaroglu L."/>
            <person name="Beasley E.M."/>
            <person name="Beeson K.Y."/>
            <person name="Benos P.V."/>
            <person name="Berman B.P."/>
            <person name="Bhandari D."/>
            <person name="Bolshakov S."/>
            <person name="Borkova D."/>
            <person name="Botchan M.R."/>
            <person name="Bouck J."/>
            <person name="Brokstein P."/>
            <person name="Brottier P."/>
            <person name="Burtis K.C."/>
            <person name="Busam D.A."/>
            <person name="Butler H."/>
            <person name="Cadieu E."/>
            <person name="Center A."/>
            <person name="Chandra I."/>
            <person name="Cherry J.M."/>
            <person name="Cawley S."/>
            <person name="Dahlke C."/>
            <person name="Davenport L.B."/>
            <person name="Davies P."/>
            <person name="de Pablos B."/>
            <person name="Delcher A."/>
            <person name="Deng Z."/>
            <person name="Mays A.D."/>
            <person name="Dew I."/>
            <person name="Dietz S.M."/>
            <person name="Dodson K."/>
            <person name="Doup L.E."/>
            <person name="Downes M."/>
            <person name="Dugan-Rocha S."/>
            <person name="Dunkov B.C."/>
            <person name="Dunn P."/>
            <person name="Durbin K.J."/>
            <person name="Evangelista C.C."/>
            <person name="Ferraz C."/>
            <person name="Ferriera S."/>
            <person name="Fleischmann W."/>
            <person name="Fosler C."/>
            <person name="Gabrielian A.E."/>
            <person name="Garg N.S."/>
            <person name="Gelbart W.M."/>
            <person name="Glasser K."/>
            <person name="Glodek A."/>
            <person name="Gong F."/>
            <person name="Gorrell J.H."/>
            <person name="Gu Z."/>
            <person name="Guan P."/>
            <person name="Harris M."/>
            <person name="Harris N.L."/>
            <person name="Harvey D.A."/>
            <person name="Heiman T.J."/>
            <person name="Hernandez J.R."/>
            <person name="Houck J."/>
            <person name="Hostin D."/>
            <person name="Houston K.A."/>
            <person name="Howland T.J."/>
            <person name="Wei M.-H."/>
            <person name="Ibegwam C."/>
            <person name="Jalali M."/>
            <person name="Kalush F."/>
            <person name="Karpen G.H."/>
            <person name="Ke Z."/>
            <person name="Kennison J.A."/>
            <person name="Ketchum K.A."/>
            <person name="Kimmel B.E."/>
            <person name="Kodira C.D."/>
            <person name="Kraft C.L."/>
            <person name="Kravitz S."/>
            <person name="Kulp D."/>
            <person name="Lai Z."/>
            <person name="Lasko P."/>
            <person name="Lei Y."/>
            <person name="Levitsky A.A."/>
            <person name="Li J.H."/>
            <person name="Li Z."/>
            <person name="Liang Y."/>
            <person name="Lin X."/>
            <person name="Liu X."/>
            <person name="Mattei B."/>
            <person name="McIntosh T.C."/>
            <person name="McLeod M.P."/>
            <person name="McPherson D."/>
            <person name="Merkulov G."/>
            <person name="Milshina N.V."/>
            <person name="Mobarry C."/>
            <person name="Morris J."/>
            <person name="Moshrefi A."/>
            <person name="Mount S.M."/>
            <person name="Moy M."/>
            <person name="Murphy B."/>
            <person name="Murphy L."/>
            <person name="Muzny D.M."/>
            <person name="Nelson D.L."/>
            <person name="Nelson D.R."/>
            <person name="Nelson K.A."/>
            <person name="Nixon K."/>
            <person name="Nusskern D.R."/>
            <person name="Pacleb J.M."/>
            <person name="Palazzolo M."/>
            <person name="Pittman G.S."/>
            <person name="Pan S."/>
            <person name="Pollard J."/>
            <person name="Puri V."/>
            <person name="Reese M.G."/>
            <person name="Reinert K."/>
            <person name="Remington K."/>
            <person name="Saunders R.D.C."/>
            <person name="Scheeler F."/>
            <person name="Shen H."/>
            <person name="Shue B.C."/>
            <person name="Siden-Kiamos I."/>
            <person name="Simpson M."/>
            <person name="Skupski M.P."/>
            <person name="Smith T.J."/>
            <person name="Spier E."/>
            <person name="Spradling A.C."/>
            <person name="Stapleton M."/>
            <person name="Strong R."/>
            <person name="Sun E."/>
            <person name="Svirskas R."/>
            <person name="Tector C."/>
            <person name="Turner R."/>
            <person name="Venter E."/>
            <person name="Wang A.H."/>
            <person name="Wang X."/>
            <person name="Wang Z.-Y."/>
            <person name="Wassarman D.A."/>
            <person name="Weinstock G.M."/>
            <person name="Weissenbach J."/>
            <person name="Williams S.M."/>
            <person name="Woodage T."/>
            <person name="Worley K.C."/>
            <person name="Wu D."/>
            <person name="Yang S."/>
            <person name="Yao Q.A."/>
            <person name="Ye J."/>
            <person name="Yeh R.-F."/>
            <person name="Zaveri J.S."/>
            <person name="Zhan M."/>
            <person name="Zhang G."/>
            <person name="Zhao Q."/>
            <person name="Zheng L."/>
            <person name="Zheng X.H."/>
            <person name="Zhong F.N."/>
            <person name="Zhong W."/>
            <person name="Zhou X."/>
            <person name="Zhu S.C."/>
            <person name="Zhu X."/>
            <person name="Smith H.O."/>
            <person name="Gibbs R.A."/>
            <person name="Myers E.W."/>
            <person name="Rubin G.M."/>
            <person name="Venter J.C."/>
        </authorList>
    </citation>
    <scope>NUCLEOTIDE SEQUENCE [LARGE SCALE GENOMIC DNA]</scope>
    <source>
        <strain>Berkeley</strain>
    </source>
</reference>
<reference key="3">
    <citation type="journal article" date="2002" name="Genome Biol.">
        <title>Annotation of the Drosophila melanogaster euchromatic genome: a systematic review.</title>
        <authorList>
            <person name="Misra S."/>
            <person name="Crosby M.A."/>
            <person name="Mungall C.J."/>
            <person name="Matthews B.B."/>
            <person name="Campbell K.S."/>
            <person name="Hradecky P."/>
            <person name="Huang Y."/>
            <person name="Kaminker J.S."/>
            <person name="Millburn G.H."/>
            <person name="Prochnik S.E."/>
            <person name="Smith C.D."/>
            <person name="Tupy J.L."/>
            <person name="Whitfield E.J."/>
            <person name="Bayraktaroglu L."/>
            <person name="Berman B.P."/>
            <person name="Bettencourt B.R."/>
            <person name="Celniker S.E."/>
            <person name="de Grey A.D.N.J."/>
            <person name="Drysdale R.A."/>
            <person name="Harris N.L."/>
            <person name="Richter J."/>
            <person name="Russo S."/>
            <person name="Schroeder A.J."/>
            <person name="Shu S.Q."/>
            <person name="Stapleton M."/>
            <person name="Yamada C."/>
            <person name="Ashburner M."/>
            <person name="Gelbart W.M."/>
            <person name="Rubin G.M."/>
            <person name="Lewis S.E."/>
        </authorList>
    </citation>
    <scope>GENOME REANNOTATION</scope>
    <source>
        <strain>Berkeley</strain>
    </source>
</reference>
<reference key="4">
    <citation type="journal article" date="2021" name="Elife">
        <title>An actin-related protein that is most highly expressed in Drosophila testes is critical for embryonic development.</title>
        <authorList>
            <person name="Schroeder C.M."/>
            <person name="Tomlin S.A."/>
            <person name="Mejia Natividad I."/>
            <person name="Valenzuela J.R."/>
            <person name="Young J.M."/>
            <person name="Malik H.S."/>
        </authorList>
    </citation>
    <scope>FUNCTION</scope>
    <scope>SUBCELLULAR LOCATION</scope>
    <scope>TISSUE SPECIFICITY</scope>
    <scope>DISRUPTION PHENOTYPE</scope>
    <scope>MUTAGENESIS OF 1-MET--ILE-40</scope>
</reference>
<name>ACTY_DROME</name>
<accession>P45891</accession>
<accession>Q9V7T9</accession>
<sequence>MSSEVDSNSHHAAVVIDNGSGVCKAGFSPEDTPRAVFPSIVGRPRHLNVLLDSVIGDSVIGEAAARKRGILTLKYPIEHGMVKNWDEMEMVWQHTYELLRADPMDLPALLTEAPLNPKKNREKMTEIMFEHFQVPAFYVAVQAVLSLYATGRTVGIVVDSGDGVTHTVPIYEGFALPHACVRVDLAGRDLTDYLCKLLLERGVTMGTSAEREIVREIKEKLCYVSMNYAKEMDLHGKVETYELPDGQKIVLGCERFRCPEALFQPSLLGQEVMGIHEATHHSITNCDMDLRKDMYANIVLSGGTTMFRNIEHRFLQDLTEMAPPSIRIKVNASPDRRFSVWTGGSVLASLTSFQNMWIDSLEYEEVGSAIVHRKCF</sequence>
<keyword id="KW-0067">ATP-binding</keyword>
<keyword id="KW-0963">Cytoplasm</keyword>
<keyword id="KW-0206">Cytoskeleton</keyword>
<keyword id="KW-0547">Nucleotide-binding</keyword>
<keyword id="KW-1185">Reference proteome</keyword>
<dbReference type="EMBL" id="X78487">
    <property type="protein sequence ID" value="CAA55239.1"/>
    <property type="molecule type" value="mRNA"/>
</dbReference>
<dbReference type="EMBL" id="AE013599">
    <property type="protein sequence ID" value="AAF57954.1"/>
    <property type="molecule type" value="Genomic_DNA"/>
</dbReference>
<dbReference type="PIR" id="S47986">
    <property type="entry name" value="S47986"/>
</dbReference>
<dbReference type="RefSeq" id="NP_477037.2">
    <property type="nucleotide sequence ID" value="NM_057689.4"/>
</dbReference>
<dbReference type="SMR" id="P45891"/>
<dbReference type="IntAct" id="P45891">
    <property type="interactions" value="1"/>
</dbReference>
<dbReference type="STRING" id="7227.FBpp0309075"/>
<dbReference type="PaxDb" id="7227-FBpp0086174"/>
<dbReference type="DNASU" id="36879"/>
<dbReference type="EnsemblMetazoa" id="FBtr0340069">
    <property type="protein sequence ID" value="FBpp0309075"/>
    <property type="gene ID" value="FBgn0011743"/>
</dbReference>
<dbReference type="GeneID" id="36879"/>
<dbReference type="KEGG" id="dme:Dmel_CG5409"/>
<dbReference type="AGR" id="FB:FBgn0011743"/>
<dbReference type="CTD" id="36879"/>
<dbReference type="FlyBase" id="FBgn0011743">
    <property type="gene designation" value="Arp53D"/>
</dbReference>
<dbReference type="VEuPathDB" id="VectorBase:FBgn0011743"/>
<dbReference type="eggNOG" id="KOG0676">
    <property type="taxonomic scope" value="Eukaryota"/>
</dbReference>
<dbReference type="GeneTree" id="ENSGT00950000182960"/>
<dbReference type="HOGENOM" id="CLU_027965_0_2_1"/>
<dbReference type="InParanoid" id="P45891"/>
<dbReference type="OrthoDB" id="7822001at2759"/>
<dbReference type="PhylomeDB" id="P45891"/>
<dbReference type="Reactome" id="R-DME-445355">
    <property type="pathway name" value="Smooth Muscle Contraction"/>
</dbReference>
<dbReference type="SignaLink" id="P45891"/>
<dbReference type="BioGRID-ORCS" id="36879">
    <property type="hits" value="0 hits in 1 CRISPR screen"/>
</dbReference>
<dbReference type="GenomeRNAi" id="36879"/>
<dbReference type="PRO" id="PR:P45891"/>
<dbReference type="Proteomes" id="UP000000803">
    <property type="component" value="Chromosome 2R"/>
</dbReference>
<dbReference type="Bgee" id="FBgn0011743">
    <property type="expression patterns" value="Expressed in testis and 24 other cell types or tissues"/>
</dbReference>
<dbReference type="ExpressionAtlas" id="P45891">
    <property type="expression patterns" value="baseline and differential"/>
</dbReference>
<dbReference type="GO" id="GO:0015629">
    <property type="term" value="C:actin cytoskeleton"/>
    <property type="evidence" value="ECO:0000314"/>
    <property type="project" value="UniProtKB"/>
</dbReference>
<dbReference type="GO" id="GO:0045169">
    <property type="term" value="C:fusome"/>
    <property type="evidence" value="ECO:0000314"/>
    <property type="project" value="UniProtKB"/>
</dbReference>
<dbReference type="GO" id="GO:0005524">
    <property type="term" value="F:ATP binding"/>
    <property type="evidence" value="ECO:0007669"/>
    <property type="project" value="UniProtKB-KW"/>
</dbReference>
<dbReference type="GO" id="GO:0040019">
    <property type="term" value="P:positive regulation of embryonic development"/>
    <property type="evidence" value="ECO:0000315"/>
    <property type="project" value="UniProtKB"/>
</dbReference>
<dbReference type="GO" id="GO:0007286">
    <property type="term" value="P:spermatid development"/>
    <property type="evidence" value="ECO:0000315"/>
    <property type="project" value="UniProtKB"/>
</dbReference>
<dbReference type="FunFam" id="3.90.640.10:FF:000007">
    <property type="entry name" value="Actin like 7B"/>
    <property type="match status" value="1"/>
</dbReference>
<dbReference type="FunFam" id="3.30.420.40:FF:000148">
    <property type="entry name" value="Actin, alpha skeletal muscle"/>
    <property type="match status" value="1"/>
</dbReference>
<dbReference type="Gene3D" id="3.30.420.40">
    <property type="match status" value="2"/>
</dbReference>
<dbReference type="Gene3D" id="3.90.640.10">
    <property type="entry name" value="Actin, Chain A, domain 4"/>
    <property type="match status" value="1"/>
</dbReference>
<dbReference type="InterPro" id="IPR004000">
    <property type="entry name" value="Actin"/>
</dbReference>
<dbReference type="InterPro" id="IPR020902">
    <property type="entry name" value="Actin/actin-like_CS"/>
</dbReference>
<dbReference type="InterPro" id="IPR043129">
    <property type="entry name" value="ATPase_NBD"/>
</dbReference>
<dbReference type="PANTHER" id="PTHR11937">
    <property type="entry name" value="ACTIN"/>
    <property type="match status" value="1"/>
</dbReference>
<dbReference type="Pfam" id="PF00022">
    <property type="entry name" value="Actin"/>
    <property type="match status" value="1"/>
</dbReference>
<dbReference type="PRINTS" id="PR00190">
    <property type="entry name" value="ACTIN"/>
</dbReference>
<dbReference type="SMART" id="SM00268">
    <property type="entry name" value="ACTIN"/>
    <property type="match status" value="1"/>
</dbReference>
<dbReference type="SUPFAM" id="SSF53067">
    <property type="entry name" value="Actin-like ATPase domain"/>
    <property type="match status" value="2"/>
</dbReference>
<dbReference type="PROSITE" id="PS01132">
    <property type="entry name" value="ACTINS_ACT_LIKE"/>
    <property type="match status" value="1"/>
</dbReference>
<organism>
    <name type="scientific">Drosophila melanogaster</name>
    <name type="common">Fruit fly</name>
    <dbReference type="NCBI Taxonomy" id="7227"/>
    <lineage>
        <taxon>Eukaryota</taxon>
        <taxon>Metazoa</taxon>
        <taxon>Ecdysozoa</taxon>
        <taxon>Arthropoda</taxon>
        <taxon>Hexapoda</taxon>
        <taxon>Insecta</taxon>
        <taxon>Pterygota</taxon>
        <taxon>Neoptera</taxon>
        <taxon>Endopterygota</taxon>
        <taxon>Diptera</taxon>
        <taxon>Brachycera</taxon>
        <taxon>Muscomorpha</taxon>
        <taxon>Ephydroidea</taxon>
        <taxon>Drosophilidae</taxon>
        <taxon>Drosophila</taxon>
        <taxon>Sophophora</taxon>
    </lineage>
</organism>
<comment type="function">
    <text evidence="1">Required for optimal embryo development, particularly under heat stress conditions (PubMed:34282725). Also appears to have a role in negatively regulating spermatocyte cyst development (PubMed:34282725). Under heat stress conditions, required for the correct organization and migration of nuclei during early embryogenesis, and therefore possibly functions by regulating embryonic actin networks during the heat stress response (PubMed:34282725).</text>
</comment>
<comment type="subcellular location">
    <subcellularLocation>
        <location evidence="1">Cytoplasm</location>
        <location evidence="1">Cytoskeleton</location>
    </subcellularLocation>
    <text evidence="1">In spermatocyte cysts, detected only during and after meiosis (PubMed:34282725). Localizes to two germline-specific actin structures: the fusome and actin cones (PubMed:34282725). First localizes to the fusome during meiosis (PubMed:34282725). Then once spermatid elongation is complete, localizes to the leading edge of the forming actin cones where it remains until the actin cones are destroyed following the completion of sperm individualization (PubMed:34282725).</text>
</comment>
<comment type="tissue specificity">
    <text evidence="1">High expression in males whereas expression in females is very low (PubMed:34282725). In adult males, highest levels of expression are in the testis (PubMed:34282725). In adult females, expressed only in the ovaries at very low levels (PubMed:34282725). In larvae, highly expressed in the imaginal disk whereas in prepupae and pupae modest levels of expression occur in the fat body (PubMed:34282725).</text>
</comment>
<comment type="disruption phenotype">
    <text evidence="1">Increases male fertility but overall population fitness is decreased (PubMed:34282725). Males develop significantly more spermatocyte cysts with actin cones per testis, suggesting that sperm production is accelerated (PubMed:34282725). No effect on female fertility at 25 degrees Celsius (PubMed:34282725). However at 29 degrees Celsius (heat stress conditions), embryos lacking either maternal and/or zygotic Arp53D activity display gross nuclear abnormalities and nuclei appear disorganized and uncompacted (PubMed:34282725). As a result females produce fewer progeny that reach the adult stage (PubMed:34282725). No effect on number of eggs laid or the percent of fertilized eggs (PubMed:34282725).</text>
</comment>
<comment type="similarity">
    <text evidence="3">Belongs to the actin family. ARP1 subfamily.</text>
</comment>
<proteinExistence type="evidence at protein level"/>
<gene>
    <name evidence="2 4" type="primary">Arp53D</name>
    <name evidence="4" type="synonym">Actr53D</name>
    <name evidence="4" type="ORF">CG5409</name>
</gene>
<feature type="chain" id="PRO_0000089062" description="Actin-like protein 53D">
    <location>
        <begin position="1"/>
        <end position="376"/>
    </location>
</feature>
<feature type="region of interest" description="Necessary and sufficient for recruitment to the fusome and actin cones of spermatocyte cysts" evidence="1">
    <location>
        <begin position="1"/>
        <end position="40"/>
    </location>
</feature>
<feature type="mutagenesis site" description="Detected in spermatocyte cysts during meiosis but expression is diffuse. No localization to the fusome or actin cones." evidence="1">
    <location>
        <begin position="1"/>
        <end position="40"/>
    </location>
</feature>
<feature type="sequence conflict" description="In Ref. 1; CAA55239." evidence="3" ref="1">
    <original>AAAR</original>
    <variation>RQPE</variation>
    <location>
        <begin position="63"/>
        <end position="66"/>
    </location>
</feature>
<feature type="sequence conflict" description="In Ref. 1; CAA55239." evidence="3" ref="1">
    <original>YA</original>
    <variation>CT</variation>
    <location>
        <begin position="148"/>
        <end position="149"/>
    </location>
</feature>
<protein>
    <recommendedName>
        <fullName evidence="2">Actin-like protein 53D</fullName>
    </recommendedName>
</protein>